<dbReference type="EMBL" id="AJ000513">
    <property type="protein sequence ID" value="CAA04147.1"/>
    <property type="molecule type" value="Genomic_DNA"/>
</dbReference>
<dbReference type="SMR" id="O86448"/>
<dbReference type="GO" id="GO:1990904">
    <property type="term" value="C:ribonucleoprotein complex"/>
    <property type="evidence" value="ECO:0007669"/>
    <property type="project" value="UniProtKB-KW"/>
</dbReference>
<dbReference type="GO" id="GO:0005840">
    <property type="term" value="C:ribosome"/>
    <property type="evidence" value="ECO:0007669"/>
    <property type="project" value="UniProtKB-KW"/>
</dbReference>
<dbReference type="GO" id="GO:0003735">
    <property type="term" value="F:structural constituent of ribosome"/>
    <property type="evidence" value="ECO:0007669"/>
    <property type="project" value="InterPro"/>
</dbReference>
<dbReference type="GO" id="GO:0006412">
    <property type="term" value="P:translation"/>
    <property type="evidence" value="ECO:0007669"/>
    <property type="project" value="UniProtKB-UniRule"/>
</dbReference>
<dbReference type="Gene3D" id="1.10.287.3980">
    <property type="match status" value="1"/>
</dbReference>
<dbReference type="HAMAP" id="MF_00391">
    <property type="entry name" value="Ribosomal_bL34"/>
    <property type="match status" value="1"/>
</dbReference>
<dbReference type="InterPro" id="IPR000271">
    <property type="entry name" value="Ribosomal_bL34"/>
</dbReference>
<dbReference type="NCBIfam" id="TIGR01030">
    <property type="entry name" value="rpmH_bact"/>
    <property type="match status" value="1"/>
</dbReference>
<dbReference type="Pfam" id="PF00468">
    <property type="entry name" value="Ribosomal_L34"/>
    <property type="match status" value="1"/>
</dbReference>
<comment type="similarity">
    <text evidence="2">Belongs to the bacterial ribosomal protein bL34 family.</text>
</comment>
<proteinExistence type="inferred from homology"/>
<keyword id="KW-0687">Ribonucleoprotein</keyword>
<keyword id="KW-0689">Ribosomal protein</keyword>
<feature type="chain" id="PRO_0000187442" description="Large ribosomal subunit protein bL34">
    <location>
        <begin position="1"/>
        <end position="46"/>
    </location>
</feature>
<feature type="region of interest" description="Disordered" evidence="1">
    <location>
        <begin position="1"/>
        <end position="26"/>
    </location>
</feature>
<feature type="compositionally biased region" description="Basic residues" evidence="1">
    <location>
        <begin position="1"/>
        <end position="17"/>
    </location>
</feature>
<organism>
    <name type="scientific">Pseudanabaena sp. (strain PCC 6903)</name>
    <dbReference type="NCBI Taxonomy" id="102126"/>
    <lineage>
        <taxon>Bacteria</taxon>
        <taxon>Bacillati</taxon>
        <taxon>Cyanobacteriota</taxon>
        <taxon>Cyanophyceae</taxon>
        <taxon>Pseudanabaenales</taxon>
        <taxon>Pseudanabaenaceae</taxon>
        <taxon>Pseudanabaena</taxon>
    </lineage>
</organism>
<name>RL34_PSEAO</name>
<sequence>MTKRTLRGSVRKKKRTSGFRARMETPTGRRVIKARRSRGRVRLTTV</sequence>
<reference key="1">
    <citation type="submission" date="1997-07" db="EMBL/GenBank/DDBJ databases">
        <title>Sequence encoding the protein component of RNase P from the cyanobacterium Pseudanabaena sp. PCC6903.</title>
        <authorList>
            <person name="Pascual A."/>
            <person name="Tous C."/>
            <person name="Vioque A."/>
        </authorList>
    </citation>
    <scope>NUCLEOTIDE SEQUENCE [GENOMIC DNA]</scope>
</reference>
<gene>
    <name type="primary">rpmH</name>
    <name type="synonym">rpl34</name>
</gene>
<protein>
    <recommendedName>
        <fullName evidence="2">Large ribosomal subunit protein bL34</fullName>
    </recommendedName>
    <alternativeName>
        <fullName>50S ribosomal protein L34</fullName>
    </alternativeName>
</protein>
<evidence type="ECO:0000256" key="1">
    <source>
        <dbReference type="SAM" id="MobiDB-lite"/>
    </source>
</evidence>
<evidence type="ECO:0000305" key="2"/>
<accession>O86448</accession>